<comment type="catalytic activity">
    <reaction evidence="1">
        <text>L-histidinol phosphate + 2-oxoglutarate = 3-(imidazol-4-yl)-2-oxopropyl phosphate + L-glutamate</text>
        <dbReference type="Rhea" id="RHEA:23744"/>
        <dbReference type="ChEBI" id="CHEBI:16810"/>
        <dbReference type="ChEBI" id="CHEBI:29985"/>
        <dbReference type="ChEBI" id="CHEBI:57766"/>
        <dbReference type="ChEBI" id="CHEBI:57980"/>
        <dbReference type="EC" id="2.6.1.9"/>
    </reaction>
</comment>
<comment type="cofactor">
    <cofactor evidence="1">
        <name>pyridoxal 5'-phosphate</name>
        <dbReference type="ChEBI" id="CHEBI:597326"/>
    </cofactor>
</comment>
<comment type="pathway">
    <text evidence="1">Amino-acid biosynthesis; L-histidine biosynthesis; L-histidine from 5-phospho-alpha-D-ribose 1-diphosphate: step 7/9.</text>
</comment>
<comment type="subunit">
    <text evidence="1">Homodimer.</text>
</comment>
<comment type="similarity">
    <text evidence="1">Belongs to the class-II pyridoxal-phosphate-dependent aminotransferase family. Histidinol-phosphate aminotransferase subfamily.</text>
</comment>
<proteinExistence type="inferred from homology"/>
<protein>
    <recommendedName>
        <fullName evidence="1">Histidinol-phosphate aminotransferase</fullName>
        <ecNumber evidence="1">2.6.1.9</ecNumber>
    </recommendedName>
    <alternativeName>
        <fullName evidence="1">Imidazole acetol-phosphate transaminase</fullName>
    </alternativeName>
</protein>
<dbReference type="EC" id="2.6.1.9" evidence="1"/>
<dbReference type="EMBL" id="CP000449">
    <property type="protein sequence ID" value="ABI66671.1"/>
    <property type="molecule type" value="Genomic_DNA"/>
</dbReference>
<dbReference type="RefSeq" id="WP_011644316.1">
    <property type="nucleotide sequence ID" value="NC_008347.1"/>
</dbReference>
<dbReference type="SMR" id="Q0AM22"/>
<dbReference type="STRING" id="394221.Mmar10_2379"/>
<dbReference type="KEGG" id="mmr:Mmar10_2379"/>
<dbReference type="eggNOG" id="COG0079">
    <property type="taxonomic scope" value="Bacteria"/>
</dbReference>
<dbReference type="HOGENOM" id="CLU_017584_3_3_5"/>
<dbReference type="OrthoDB" id="9809616at2"/>
<dbReference type="UniPathway" id="UPA00031">
    <property type="reaction ID" value="UER00012"/>
</dbReference>
<dbReference type="Proteomes" id="UP000001964">
    <property type="component" value="Chromosome"/>
</dbReference>
<dbReference type="GO" id="GO:0004400">
    <property type="term" value="F:histidinol-phosphate transaminase activity"/>
    <property type="evidence" value="ECO:0007669"/>
    <property type="project" value="UniProtKB-UniRule"/>
</dbReference>
<dbReference type="GO" id="GO:0030170">
    <property type="term" value="F:pyridoxal phosphate binding"/>
    <property type="evidence" value="ECO:0007669"/>
    <property type="project" value="InterPro"/>
</dbReference>
<dbReference type="GO" id="GO:0000105">
    <property type="term" value="P:L-histidine biosynthetic process"/>
    <property type="evidence" value="ECO:0007669"/>
    <property type="project" value="UniProtKB-UniRule"/>
</dbReference>
<dbReference type="CDD" id="cd00609">
    <property type="entry name" value="AAT_like"/>
    <property type="match status" value="1"/>
</dbReference>
<dbReference type="Gene3D" id="3.90.1150.10">
    <property type="entry name" value="Aspartate Aminotransferase, domain 1"/>
    <property type="match status" value="1"/>
</dbReference>
<dbReference type="Gene3D" id="3.40.640.10">
    <property type="entry name" value="Type I PLP-dependent aspartate aminotransferase-like (Major domain)"/>
    <property type="match status" value="1"/>
</dbReference>
<dbReference type="HAMAP" id="MF_01023">
    <property type="entry name" value="HisC_aminotrans_2"/>
    <property type="match status" value="1"/>
</dbReference>
<dbReference type="InterPro" id="IPR004839">
    <property type="entry name" value="Aminotransferase_I/II_large"/>
</dbReference>
<dbReference type="InterPro" id="IPR005861">
    <property type="entry name" value="HisP_aminotrans"/>
</dbReference>
<dbReference type="InterPro" id="IPR050106">
    <property type="entry name" value="HistidinolP_aminotransfase"/>
</dbReference>
<dbReference type="InterPro" id="IPR015424">
    <property type="entry name" value="PyrdxlP-dep_Trfase"/>
</dbReference>
<dbReference type="InterPro" id="IPR015421">
    <property type="entry name" value="PyrdxlP-dep_Trfase_major"/>
</dbReference>
<dbReference type="InterPro" id="IPR015422">
    <property type="entry name" value="PyrdxlP-dep_Trfase_small"/>
</dbReference>
<dbReference type="NCBIfam" id="TIGR01141">
    <property type="entry name" value="hisC"/>
    <property type="match status" value="1"/>
</dbReference>
<dbReference type="PANTHER" id="PTHR43643:SF3">
    <property type="entry name" value="HISTIDINOL-PHOSPHATE AMINOTRANSFERASE"/>
    <property type="match status" value="1"/>
</dbReference>
<dbReference type="PANTHER" id="PTHR43643">
    <property type="entry name" value="HISTIDINOL-PHOSPHATE AMINOTRANSFERASE 2"/>
    <property type="match status" value="1"/>
</dbReference>
<dbReference type="Pfam" id="PF00155">
    <property type="entry name" value="Aminotran_1_2"/>
    <property type="match status" value="1"/>
</dbReference>
<dbReference type="SUPFAM" id="SSF53383">
    <property type="entry name" value="PLP-dependent transferases"/>
    <property type="match status" value="1"/>
</dbReference>
<keyword id="KW-0028">Amino-acid biosynthesis</keyword>
<keyword id="KW-0032">Aminotransferase</keyword>
<keyword id="KW-0368">Histidine biosynthesis</keyword>
<keyword id="KW-0663">Pyridoxal phosphate</keyword>
<keyword id="KW-1185">Reference proteome</keyword>
<keyword id="KW-0808">Transferase</keyword>
<reference key="1">
    <citation type="submission" date="2006-08" db="EMBL/GenBank/DDBJ databases">
        <title>Complete sequence of Maricaulis maris MCS10.</title>
        <authorList>
            <consortium name="US DOE Joint Genome Institute"/>
            <person name="Copeland A."/>
            <person name="Lucas S."/>
            <person name="Lapidus A."/>
            <person name="Barry K."/>
            <person name="Detter J.C."/>
            <person name="Glavina del Rio T."/>
            <person name="Hammon N."/>
            <person name="Israni S."/>
            <person name="Dalin E."/>
            <person name="Tice H."/>
            <person name="Pitluck S."/>
            <person name="Saunders E."/>
            <person name="Brettin T."/>
            <person name="Bruce D."/>
            <person name="Han C."/>
            <person name="Tapia R."/>
            <person name="Gilna P."/>
            <person name="Schmutz J."/>
            <person name="Larimer F."/>
            <person name="Land M."/>
            <person name="Hauser L."/>
            <person name="Kyrpides N."/>
            <person name="Mikhailova N."/>
            <person name="Viollier P."/>
            <person name="Stephens C."/>
            <person name="Richardson P."/>
        </authorList>
    </citation>
    <scope>NUCLEOTIDE SEQUENCE [LARGE SCALE GENOMIC DNA]</scope>
    <source>
        <strain>MCS10</strain>
    </source>
</reference>
<name>HIS8_MARMM</name>
<accession>Q0AM22</accession>
<gene>
    <name evidence="1" type="primary">hisC</name>
    <name type="ordered locus">Mmar10_2379</name>
</gene>
<sequence length="362" mass="38976">MAIEPRAGILDIRPYKPGSSEAPGIENPVKLSSNENALGCSDKAAAAMTATASKLHLYPDGGATKLREAIAEAEGLEAENIVCGTGSDELLQLLGRAYLNPGDKVVQSQYGFLVYRLVAMQCGANLVSAPERDYRSDVDAILEAAGDDTRIVFLANPNNPTGTYISAAEVRRLRDGLPASTLLVLDAAYAEFVDNPDYEAGIELARERDDVIVTRTFSKIHGLAALRLGWAYGNKAIIDVLHRVRGPFNVNMAAIEAGTAAIQDRDFMKRSVEHNEEWVAFLRQQIGGLGLEVTPSVCNFVLIHFPETPGKTAADADAYLTSQGLIIRAVDPYGLPNALRATVGSETENRRLVDALSTFMKA</sequence>
<evidence type="ECO:0000255" key="1">
    <source>
        <dbReference type="HAMAP-Rule" id="MF_01023"/>
    </source>
</evidence>
<organism>
    <name type="scientific">Maricaulis maris (strain MCS10)</name>
    <name type="common">Caulobacter maris</name>
    <dbReference type="NCBI Taxonomy" id="394221"/>
    <lineage>
        <taxon>Bacteria</taxon>
        <taxon>Pseudomonadati</taxon>
        <taxon>Pseudomonadota</taxon>
        <taxon>Alphaproteobacteria</taxon>
        <taxon>Maricaulales</taxon>
        <taxon>Maricaulaceae</taxon>
        <taxon>Maricaulis</taxon>
    </lineage>
</organism>
<feature type="chain" id="PRO_0000319772" description="Histidinol-phosphate aminotransferase">
    <location>
        <begin position="1"/>
        <end position="362"/>
    </location>
</feature>
<feature type="modified residue" description="N6-(pyridoxal phosphate)lysine" evidence="1">
    <location>
        <position position="219"/>
    </location>
</feature>